<protein>
    <recommendedName>
        <fullName>ATP-binding cassette sub-family C member 2</fullName>
        <ecNumber evidence="8 9">7.6.2.-</ecNumber>
        <ecNumber evidence="7">7.6.2.2</ecNumber>
        <ecNumber evidence="7 11">7.6.2.3</ecNumber>
    </recommendedName>
    <alternativeName>
        <fullName>Canalicular multidrug resistance protein</fullName>
    </alternativeName>
    <alternativeName>
        <fullName evidence="14">Canalicular multispecific organic anion transporter 1</fullName>
    </alternativeName>
    <alternativeName>
        <fullName evidence="2">Multidrug resistance-associated protein 2</fullName>
    </alternativeName>
</protein>
<name>MRP2_RAT</name>
<evidence type="ECO:0000250" key="1"/>
<evidence type="ECO:0000250" key="2">
    <source>
        <dbReference type="UniProtKB" id="Q92887"/>
    </source>
</evidence>
<evidence type="ECO:0000255" key="3"/>
<evidence type="ECO:0000255" key="4">
    <source>
        <dbReference type="PROSITE-ProRule" id="PRU00434"/>
    </source>
</evidence>
<evidence type="ECO:0000255" key="5">
    <source>
        <dbReference type="PROSITE-ProRule" id="PRU00441"/>
    </source>
</evidence>
<evidence type="ECO:0000256" key="6">
    <source>
        <dbReference type="SAM" id="MobiDB-lite"/>
    </source>
</evidence>
<evidence type="ECO:0000269" key="7">
    <source>
    </source>
</evidence>
<evidence type="ECO:0000269" key="8">
    <source>
    </source>
</evidence>
<evidence type="ECO:0000269" key="9">
    <source>
    </source>
</evidence>
<evidence type="ECO:0000269" key="10">
    <source>
    </source>
</evidence>
<evidence type="ECO:0000269" key="11">
    <source>
    </source>
</evidence>
<evidence type="ECO:0000269" key="12">
    <source ref="3"/>
</evidence>
<evidence type="ECO:0000303" key="13">
    <source>
    </source>
</evidence>
<evidence type="ECO:0000305" key="14"/>
<evidence type="ECO:0000305" key="15">
    <source>
    </source>
</evidence>
<evidence type="ECO:0000305" key="16">
    <source>
    </source>
</evidence>
<evidence type="ECO:0000305" key="17">
    <source>
    </source>
</evidence>
<evidence type="ECO:0000312" key="18">
    <source>
        <dbReference type="RGD" id="2366"/>
    </source>
</evidence>
<evidence type="ECO:0007744" key="19">
    <source>
    </source>
</evidence>
<evidence type="ECO:0007829" key="20">
    <source>
        <dbReference type="PDB" id="8RQ3"/>
    </source>
</evidence>
<evidence type="ECO:0007829" key="21">
    <source>
        <dbReference type="PDB" id="8RQ4"/>
    </source>
</evidence>
<accession>Q63120</accession>
<accession>Q63145</accession>
<feature type="chain" id="PRO_0000093359" description="ATP-binding cassette sub-family C member 2">
    <location>
        <begin position="1"/>
        <end position="1541"/>
    </location>
</feature>
<feature type="topological domain" description="Extracellular" evidence="1">
    <location>
        <begin position="1"/>
        <end position="26"/>
    </location>
</feature>
<feature type="transmembrane region" description="Helical; Name=1" evidence="5">
    <location>
        <begin position="27"/>
        <end position="47"/>
    </location>
</feature>
<feature type="topological domain" description="Cytoplasmic" evidence="1">
    <location>
        <begin position="48"/>
        <end position="67"/>
    </location>
</feature>
<feature type="transmembrane region" description="Helical; Name=2" evidence="5">
    <location>
        <begin position="68"/>
        <end position="88"/>
    </location>
</feature>
<feature type="topological domain" description="Extracellular" evidence="1">
    <location>
        <begin position="89"/>
        <end position="92"/>
    </location>
</feature>
<feature type="transmembrane region" description="Helical; Name=3" evidence="5">
    <location>
        <begin position="93"/>
        <end position="113"/>
    </location>
</feature>
<feature type="topological domain" description="Cytoplasmic" evidence="1">
    <location>
        <begin position="114"/>
        <end position="125"/>
    </location>
</feature>
<feature type="transmembrane region" description="Helical; Name=4" evidence="5">
    <location>
        <begin position="126"/>
        <end position="146"/>
    </location>
</feature>
<feature type="topological domain" description="Extracellular" evidence="1">
    <location>
        <begin position="147"/>
        <end position="164"/>
    </location>
</feature>
<feature type="transmembrane region" description="Helical; Name=5" evidence="5">
    <location>
        <begin position="165"/>
        <end position="185"/>
    </location>
</feature>
<feature type="topological domain" description="Cytoplasmic" evidence="1">
    <location>
        <begin position="186"/>
        <end position="309"/>
    </location>
</feature>
<feature type="transmembrane region" description="Helical; Name=6" evidence="5">
    <location>
        <begin position="310"/>
        <end position="330"/>
    </location>
</feature>
<feature type="topological domain" description="Extracellular" evidence="1">
    <location>
        <begin position="331"/>
        <end position="356"/>
    </location>
</feature>
<feature type="transmembrane region" description="Helical; Name=7" evidence="5">
    <location>
        <begin position="357"/>
        <end position="377"/>
    </location>
</feature>
<feature type="topological domain" description="Cytoplasmic" evidence="1">
    <location>
        <begin position="378"/>
        <end position="433"/>
    </location>
</feature>
<feature type="transmembrane region" description="Helical; Name=8" evidence="5">
    <location>
        <begin position="434"/>
        <end position="454"/>
    </location>
</feature>
<feature type="topological domain" description="Extracellular" evidence="1">
    <location>
        <begin position="455"/>
        <end position="457"/>
    </location>
</feature>
<feature type="transmembrane region" description="Helical; Name=9" evidence="5">
    <location>
        <begin position="458"/>
        <end position="478"/>
    </location>
</feature>
<feature type="topological domain" description="Cytoplasmic" evidence="1">
    <location>
        <begin position="479"/>
        <end position="540"/>
    </location>
</feature>
<feature type="transmembrane region" description="Helical; Name=10" evidence="5">
    <location>
        <begin position="541"/>
        <end position="561"/>
    </location>
</feature>
<feature type="topological domain" description="Extracellular" evidence="1">
    <location>
        <begin position="562"/>
        <end position="583"/>
    </location>
</feature>
<feature type="transmembrane region" description="Helical; Name=11" evidence="5">
    <location>
        <begin position="584"/>
        <end position="604"/>
    </location>
</feature>
<feature type="topological domain" description="Cytoplasmic" evidence="1">
    <location>
        <begin position="605"/>
        <end position="967"/>
    </location>
</feature>
<feature type="transmembrane region" description="Helical; Name=12" evidence="5">
    <location>
        <begin position="968"/>
        <end position="988"/>
    </location>
</feature>
<feature type="topological domain" description="Extracellular" evidence="1">
    <location>
        <begin position="989"/>
        <end position="1029"/>
    </location>
</feature>
<feature type="transmembrane region" description="Helical; Name=13" evidence="5">
    <location>
        <begin position="1030"/>
        <end position="1050"/>
    </location>
</feature>
<feature type="topological domain" description="Cytoplasmic" evidence="1">
    <location>
        <begin position="1051"/>
        <end position="1093"/>
    </location>
</feature>
<feature type="transmembrane region" description="Helical; Name=14" evidence="5">
    <location>
        <begin position="1094"/>
        <end position="1114"/>
    </location>
</feature>
<feature type="topological domain" description="Extracellular" evidence="1">
    <location>
        <position position="1115"/>
    </location>
</feature>
<feature type="transmembrane region" description="Helical; Name=15" evidence="5">
    <location>
        <begin position="1116"/>
        <end position="1136"/>
    </location>
</feature>
<feature type="topological domain" description="Cytoplasmic" evidence="1">
    <location>
        <begin position="1137"/>
        <end position="1207"/>
    </location>
</feature>
<feature type="transmembrane region" description="Helical; Name=16" evidence="5">
    <location>
        <begin position="1208"/>
        <end position="1228"/>
    </location>
</feature>
<feature type="topological domain" description="Extracellular" evidence="1">
    <location>
        <begin position="1229"/>
        <end position="1230"/>
    </location>
</feature>
<feature type="transmembrane region" description="Helical; Name=17" evidence="5">
    <location>
        <begin position="1231"/>
        <end position="1251"/>
    </location>
</feature>
<feature type="topological domain" description="Cytoplasmic" evidence="1">
    <location>
        <begin position="1252"/>
        <end position="1541"/>
    </location>
</feature>
<feature type="domain" description="ABC transmembrane type-1 1" evidence="5">
    <location>
        <begin position="318"/>
        <end position="601"/>
    </location>
</feature>
<feature type="domain" description="ABC transporter 1" evidence="4">
    <location>
        <begin position="633"/>
        <end position="857"/>
    </location>
</feature>
<feature type="domain" description="ABC transmembrane type-1 2" evidence="5">
    <location>
        <begin position="975"/>
        <end position="1260"/>
    </location>
</feature>
<feature type="domain" description="ABC transporter 2" evidence="4">
    <location>
        <begin position="1296"/>
        <end position="1530"/>
    </location>
</feature>
<feature type="region of interest" description="Disordered" evidence="6">
    <location>
        <begin position="862"/>
        <end position="881"/>
    </location>
</feature>
<feature type="region of interest" description="Disordered" evidence="6">
    <location>
        <begin position="901"/>
        <end position="923"/>
    </location>
</feature>
<feature type="compositionally biased region" description="Low complexity" evidence="6">
    <location>
        <begin position="906"/>
        <end position="915"/>
    </location>
</feature>
<feature type="binding site" evidence="4">
    <location>
        <begin position="667"/>
        <end position="674"/>
    </location>
    <ligand>
        <name>ATP</name>
        <dbReference type="ChEBI" id="CHEBI:30616"/>
        <label>1</label>
    </ligand>
</feature>
<feature type="binding site" evidence="4">
    <location>
        <begin position="1330"/>
        <end position="1337"/>
    </location>
    <ligand>
        <name>ATP</name>
        <dbReference type="ChEBI" id="CHEBI:30616"/>
        <label>2</label>
    </ligand>
</feature>
<feature type="modified residue" description="Phosphoserine" evidence="19">
    <location>
        <position position="279"/>
    </location>
</feature>
<feature type="modified residue" description="Phosphoserine" evidence="19">
    <location>
        <position position="281"/>
    </location>
</feature>
<feature type="modified residue" description="Phosphoserine" evidence="19">
    <location>
        <position position="874"/>
    </location>
</feature>
<feature type="modified residue" description="Phosphoserine" evidence="2">
    <location>
        <position position="922"/>
    </location>
</feature>
<feature type="modified residue" description="Phosphoserine" evidence="2">
    <location>
        <position position="926"/>
    </location>
</feature>
<feature type="modified residue" description="Phosphoserine" evidence="2">
    <location>
        <position position="1434"/>
    </location>
</feature>
<feature type="glycosylation site" description="N-linked (GlcNAc...) asparagine" evidence="3">
    <location>
        <position position="6"/>
    </location>
</feature>
<feature type="glycosylation site" description="N-linked (GlcNAc...) asparagine" evidence="3">
    <location>
        <position position="1007"/>
    </location>
</feature>
<feature type="glycosylation site" description="N-linked (GlcNAc...) asparagine" evidence="3">
    <location>
        <position position="1010"/>
    </location>
</feature>
<feature type="glycosylation site" description="N-linked (GlcNAc...) asparagine" evidence="3">
    <location>
        <position position="1011"/>
    </location>
</feature>
<feature type="sequence conflict" description="In Ref. 3; BAA13016." evidence="14" ref="3">
    <original>M</original>
    <variation>V</variation>
    <location>
        <position position="420"/>
    </location>
</feature>
<feature type="helix" evidence="20">
    <location>
        <begin position="2"/>
        <end position="5"/>
    </location>
</feature>
<feature type="helix" evidence="21">
    <location>
        <begin position="12"/>
        <end position="15"/>
    </location>
</feature>
<feature type="strand" evidence="20">
    <location>
        <begin position="16"/>
        <end position="19"/>
    </location>
</feature>
<feature type="helix" evidence="20">
    <location>
        <begin position="24"/>
        <end position="50"/>
    </location>
</feature>
<feature type="helix" evidence="20">
    <location>
        <begin position="62"/>
        <end position="89"/>
    </location>
</feature>
<feature type="turn" evidence="20">
    <location>
        <begin position="97"/>
        <end position="100"/>
    </location>
</feature>
<feature type="helix" evidence="20">
    <location>
        <begin position="101"/>
        <end position="117"/>
    </location>
</feature>
<feature type="helix" evidence="20">
    <location>
        <begin position="119"/>
        <end position="122"/>
    </location>
</feature>
<feature type="strand" evidence="20">
    <location>
        <begin position="123"/>
        <end position="127"/>
    </location>
</feature>
<feature type="helix" evidence="20">
    <location>
        <begin position="129"/>
        <end position="154"/>
    </location>
</feature>
<feature type="helix" evidence="20">
    <location>
        <begin position="161"/>
        <end position="182"/>
    </location>
</feature>
<feature type="strand" evidence="21">
    <location>
        <begin position="189"/>
        <end position="191"/>
    </location>
</feature>
<feature type="helix" evidence="20">
    <location>
        <begin position="193"/>
        <end position="195"/>
    </location>
</feature>
<feature type="helix" evidence="20">
    <location>
        <begin position="199"/>
        <end position="203"/>
    </location>
</feature>
<feature type="turn" evidence="20">
    <location>
        <begin position="204"/>
        <end position="208"/>
    </location>
</feature>
<feature type="helix" evidence="20">
    <location>
        <begin position="209"/>
        <end position="217"/>
    </location>
</feature>
<feature type="turn" evidence="20">
    <location>
        <begin position="222"/>
        <end position="224"/>
    </location>
</feature>
<feature type="turn" evidence="21">
    <location>
        <begin position="230"/>
        <end position="232"/>
    </location>
</feature>
<feature type="helix" evidence="20">
    <location>
        <begin position="234"/>
        <end position="264"/>
    </location>
</feature>
<feature type="helix" evidence="20">
    <location>
        <begin position="306"/>
        <end position="331"/>
    </location>
</feature>
<feature type="helix" evidence="20">
    <location>
        <begin position="332"/>
        <end position="334"/>
    </location>
</feature>
<feature type="helix" evidence="20">
    <location>
        <begin position="335"/>
        <end position="347"/>
    </location>
</feature>
<feature type="helix" evidence="20">
    <location>
        <begin position="354"/>
        <end position="400"/>
    </location>
</feature>
<feature type="helix" evidence="20">
    <location>
        <begin position="405"/>
        <end position="408"/>
    </location>
</feature>
<feature type="strand" evidence="20">
    <location>
        <begin position="409"/>
        <end position="411"/>
    </location>
</feature>
<feature type="helix" evidence="20">
    <location>
        <begin position="413"/>
        <end position="421"/>
    </location>
</feature>
<feature type="helix" evidence="20">
    <location>
        <begin position="423"/>
        <end position="432"/>
    </location>
</feature>
<feature type="helix" evidence="20">
    <location>
        <begin position="433"/>
        <end position="435"/>
    </location>
</feature>
<feature type="helix" evidence="20">
    <location>
        <begin position="436"/>
        <end position="455"/>
    </location>
</feature>
<feature type="helix" evidence="20">
    <location>
        <begin position="456"/>
        <end position="458"/>
    </location>
</feature>
<feature type="helix" evidence="20">
    <location>
        <begin position="459"/>
        <end position="503"/>
    </location>
</feature>
<feature type="helix" evidence="20">
    <location>
        <begin position="505"/>
        <end position="510"/>
    </location>
</feature>
<feature type="helix" evidence="20">
    <location>
        <begin position="514"/>
        <end position="563"/>
    </location>
</feature>
<feature type="helix" evidence="20">
    <location>
        <begin position="572"/>
        <end position="585"/>
    </location>
</feature>
<feature type="helix" evidence="20">
    <location>
        <begin position="588"/>
        <end position="612"/>
    </location>
</feature>
<feature type="strand" evidence="20">
    <location>
        <begin position="621"/>
        <end position="628"/>
    </location>
</feature>
<feature type="strand" evidence="20">
    <location>
        <begin position="630"/>
        <end position="643"/>
    </location>
</feature>
<feature type="strand" evidence="20">
    <location>
        <begin position="649"/>
        <end position="657"/>
    </location>
</feature>
<feature type="strand" evidence="20">
    <location>
        <begin position="663"/>
        <end position="667"/>
    </location>
</feature>
<feature type="helix" evidence="20">
    <location>
        <begin position="673"/>
        <end position="681"/>
    </location>
</feature>
<feature type="strand" evidence="20">
    <location>
        <begin position="684"/>
        <end position="695"/>
    </location>
</feature>
<feature type="strand" evidence="20">
    <location>
        <begin position="697"/>
        <end position="700"/>
    </location>
</feature>
<feature type="strand" evidence="20">
    <location>
        <begin position="708"/>
        <end position="710"/>
    </location>
</feature>
<feature type="helix" evidence="20">
    <location>
        <begin position="711"/>
        <end position="716"/>
    </location>
</feature>
<feature type="helix" evidence="20">
    <location>
        <begin position="723"/>
        <end position="732"/>
    </location>
</feature>
<feature type="helix" evidence="20">
    <location>
        <begin position="736"/>
        <end position="741"/>
    </location>
</feature>
<feature type="strand" evidence="20">
    <location>
        <begin position="742"/>
        <end position="745"/>
    </location>
</feature>
<feature type="strand" evidence="20">
    <location>
        <begin position="749"/>
        <end position="753"/>
    </location>
</feature>
<feature type="helix" evidence="20">
    <location>
        <begin position="759"/>
        <end position="773"/>
    </location>
</feature>
<feature type="strand" evidence="20">
    <location>
        <begin position="776"/>
        <end position="780"/>
    </location>
</feature>
<feature type="strand" evidence="20">
    <location>
        <begin position="785"/>
        <end position="787"/>
    </location>
</feature>
<feature type="helix" evidence="20">
    <location>
        <begin position="789"/>
        <end position="799"/>
    </location>
</feature>
<feature type="turn" evidence="20">
    <location>
        <begin position="805"/>
        <end position="808"/>
    </location>
</feature>
<feature type="strand" evidence="20">
    <location>
        <begin position="809"/>
        <end position="814"/>
    </location>
</feature>
<feature type="strand" evidence="21">
    <location>
        <begin position="818"/>
        <end position="820"/>
    </location>
</feature>
<feature type="helix" evidence="20">
    <location>
        <begin position="821"/>
        <end position="823"/>
    </location>
</feature>
<feature type="strand" evidence="20">
    <location>
        <begin position="825"/>
        <end position="831"/>
    </location>
</feature>
<feature type="strand" evidence="20">
    <location>
        <begin position="834"/>
        <end position="839"/>
    </location>
</feature>
<feature type="helix" evidence="20">
    <location>
        <begin position="841"/>
        <end position="846"/>
    </location>
</feature>
<feature type="helix" evidence="20">
    <location>
        <begin position="850"/>
        <end position="857"/>
    </location>
</feature>
<feature type="helix" evidence="20">
    <location>
        <begin position="858"/>
        <end position="860"/>
    </location>
</feature>
<feature type="turn" evidence="20">
    <location>
        <begin position="898"/>
        <end position="900"/>
    </location>
</feature>
<feature type="helix" evidence="20">
    <location>
        <begin position="901"/>
        <end position="911"/>
    </location>
</feature>
<feature type="helix" evidence="20">
    <location>
        <begin position="960"/>
        <end position="970"/>
    </location>
</feature>
<feature type="helix" evidence="20">
    <location>
        <begin position="973"/>
        <end position="997"/>
    </location>
</feature>
<feature type="helix" evidence="20">
    <location>
        <begin position="1001"/>
        <end position="1003"/>
    </location>
</feature>
<feature type="helix" evidence="20">
    <location>
        <begin position="1009"/>
        <end position="1011"/>
    </location>
</feature>
<feature type="helix" evidence="20">
    <location>
        <begin position="1013"/>
        <end position="1060"/>
    </location>
</feature>
<feature type="helix" evidence="20">
    <location>
        <begin position="1065"/>
        <end position="1070"/>
    </location>
</feature>
<feature type="helix" evidence="20">
    <location>
        <begin position="1073"/>
        <end position="1081"/>
    </location>
</feature>
<feature type="helix" evidence="20">
    <location>
        <begin position="1084"/>
        <end position="1088"/>
    </location>
</feature>
<feature type="helix" evidence="20">
    <location>
        <begin position="1090"/>
        <end position="1115"/>
    </location>
</feature>
<feature type="helix" evidence="20">
    <location>
        <begin position="1117"/>
        <end position="1121"/>
    </location>
</feature>
<feature type="helix" evidence="20">
    <location>
        <begin position="1123"/>
        <end position="1164"/>
    </location>
</feature>
<feature type="helix" evidence="20">
    <location>
        <begin position="1166"/>
        <end position="1172"/>
    </location>
</feature>
<feature type="helix" evidence="20">
    <location>
        <begin position="1175"/>
        <end position="1224"/>
    </location>
</feature>
<feature type="turn" evidence="20">
    <location>
        <begin position="1225"/>
        <end position="1228"/>
    </location>
</feature>
<feature type="helix" evidence="20">
    <location>
        <begin position="1231"/>
        <end position="1241"/>
    </location>
</feature>
<feature type="helix" evidence="20">
    <location>
        <begin position="1245"/>
        <end position="1261"/>
    </location>
</feature>
<feature type="helix" evidence="20">
    <location>
        <begin position="1263"/>
        <end position="1272"/>
    </location>
</feature>
<feature type="turn" evidence="21">
    <location>
        <begin position="1290"/>
        <end position="1293"/>
    </location>
</feature>
<feature type="strand" evidence="20">
    <location>
        <begin position="1296"/>
        <end position="1303"/>
    </location>
</feature>
<feature type="strand" evidence="20">
    <location>
        <begin position="1305"/>
        <end position="1309"/>
    </location>
</feature>
<feature type="strand" evidence="20">
    <location>
        <begin position="1312"/>
        <end position="1316"/>
    </location>
</feature>
<feature type="strand" evidence="21">
    <location>
        <begin position="1318"/>
        <end position="1320"/>
    </location>
</feature>
<feature type="strand" evidence="20">
    <location>
        <begin position="1325"/>
        <end position="1329"/>
    </location>
</feature>
<feature type="helix" evidence="20">
    <location>
        <begin position="1336"/>
        <end position="1342"/>
    </location>
</feature>
<feature type="strand" evidence="20">
    <location>
        <begin position="1345"/>
        <end position="1347"/>
    </location>
</feature>
<feature type="strand" evidence="20">
    <location>
        <begin position="1349"/>
        <end position="1356"/>
    </location>
</feature>
<feature type="helix" evidence="20">
    <location>
        <begin position="1361"/>
        <end position="1363"/>
    </location>
</feature>
<feature type="helix" evidence="20">
    <location>
        <begin position="1366"/>
        <end position="1371"/>
    </location>
</feature>
<feature type="strand" evidence="20">
    <location>
        <begin position="1384"/>
        <end position="1386"/>
    </location>
</feature>
<feature type="helix" evidence="20">
    <location>
        <begin position="1387"/>
        <end position="1391"/>
    </location>
</feature>
<feature type="helix" evidence="20">
    <location>
        <begin position="1399"/>
        <end position="1408"/>
    </location>
</feature>
<feature type="helix" evidence="20">
    <location>
        <begin position="1412"/>
        <end position="1415"/>
    </location>
</feature>
<feature type="strand" evidence="20">
    <location>
        <begin position="1418"/>
        <end position="1421"/>
    </location>
</feature>
<feature type="strand" evidence="20">
    <location>
        <begin position="1431"/>
        <end position="1433"/>
    </location>
</feature>
<feature type="helix" evidence="20">
    <location>
        <begin position="1435"/>
        <end position="1449"/>
    </location>
</feature>
<feature type="strand" evidence="20">
    <location>
        <begin position="1452"/>
        <end position="1457"/>
    </location>
</feature>
<feature type="helix" evidence="20">
    <location>
        <begin position="1465"/>
        <end position="1478"/>
    </location>
</feature>
<feature type="strand" evidence="20">
    <location>
        <begin position="1482"/>
        <end position="1487"/>
    </location>
</feature>
<feature type="helix" evidence="20">
    <location>
        <begin position="1491"/>
        <end position="1493"/>
    </location>
</feature>
<feature type="turn" evidence="20">
    <location>
        <begin position="1494"/>
        <end position="1496"/>
    </location>
</feature>
<feature type="strand" evidence="20">
    <location>
        <begin position="1497"/>
        <end position="1504"/>
    </location>
</feature>
<feature type="helix" evidence="20">
    <location>
        <begin position="1514"/>
        <end position="1518"/>
    </location>
</feature>
<feature type="turn" evidence="21">
    <location>
        <begin position="1520"/>
        <end position="1522"/>
    </location>
</feature>
<feature type="helix" evidence="20">
    <location>
        <begin position="1523"/>
        <end position="1527"/>
    </location>
</feature>
<keyword id="KW-0002">3D-structure</keyword>
<keyword id="KW-0067">ATP-binding</keyword>
<keyword id="KW-1003">Cell membrane</keyword>
<keyword id="KW-0325">Glycoprotein</keyword>
<keyword id="KW-0445">Lipid transport</keyword>
<keyword id="KW-0472">Membrane</keyword>
<keyword id="KW-0547">Nucleotide-binding</keyword>
<keyword id="KW-0597">Phosphoprotein</keyword>
<keyword id="KW-1185">Reference proteome</keyword>
<keyword id="KW-0677">Repeat</keyword>
<keyword id="KW-1278">Translocase</keyword>
<keyword id="KW-0812">Transmembrane</keyword>
<keyword id="KW-1133">Transmembrane helix</keyword>
<keyword id="KW-0813">Transport</keyword>
<organism>
    <name type="scientific">Rattus norvegicus</name>
    <name type="common">Rat</name>
    <dbReference type="NCBI Taxonomy" id="10116"/>
    <lineage>
        <taxon>Eukaryota</taxon>
        <taxon>Metazoa</taxon>
        <taxon>Chordata</taxon>
        <taxon>Craniata</taxon>
        <taxon>Vertebrata</taxon>
        <taxon>Euteleostomi</taxon>
        <taxon>Mammalia</taxon>
        <taxon>Eutheria</taxon>
        <taxon>Euarchontoglires</taxon>
        <taxon>Glires</taxon>
        <taxon>Rodentia</taxon>
        <taxon>Myomorpha</taxon>
        <taxon>Muroidea</taxon>
        <taxon>Muridae</taxon>
        <taxon>Murinae</taxon>
        <taxon>Rattus</taxon>
    </lineage>
</organism>
<gene>
    <name evidence="18" type="primary">Abcc2</name>
    <name type="synonym">Cmoat</name>
    <name evidence="13" type="synonym">Cmrp</name>
    <name type="synonym">Mrp2</name>
</gene>
<reference key="1">
    <citation type="journal article" date="1996" name="Science">
        <title>Congenital jaundice in rats with a mutation in a multidrug resistance-associated protein gene.</title>
        <authorList>
            <person name="Paulusma C.C."/>
            <person name="Bosma P.J."/>
            <person name="Zaman G.J.R."/>
            <person name="Bakker C.T.M."/>
            <person name="Otter M."/>
            <person name="Scheffer G.L."/>
            <person name="Scheper R.J."/>
            <person name="Borst P."/>
            <person name="Oude Elferink R.P.J."/>
        </authorList>
    </citation>
    <scope>NUCLEOTIDE SEQUENCE [MRNA]</scope>
    <source>
        <strain>Wistar</strain>
        <tissue>Liver</tissue>
    </source>
</reference>
<reference key="2">
    <citation type="journal article" date="1996" name="J. Biol. Chem.">
        <title>cDNA cloning of the hepatocyte canalicular isoform of the multidrug resistance protein, cMrp, reveals a novel conjugate export pump deficient in hyperbilirubinemic mutant rats.</title>
        <authorList>
            <person name="Buechler M."/>
            <person name="Koenig J."/>
            <person name="Brom M."/>
            <person name="Kartenbeck J."/>
            <person name="Spring H."/>
            <person name="Horie T."/>
            <person name="Keppler D."/>
        </authorList>
    </citation>
    <scope>NUCLEOTIDE SEQUENCE [MRNA]</scope>
    <scope>INVOLVEMENT IN EHBR</scope>
    <scope>FUNCTION</scope>
    <scope>CATALYTIC ACTIVITY</scope>
    <scope>TISSUE SPECIFICITY</scope>
    <source>
        <strain>Wistar</strain>
        <tissue>Liver</tissue>
    </source>
</reference>
<reference key="3">
    <citation type="journal article" date="1996" name="Int. Hepatol. Commun.">
        <title>Expression of the putative ATP-binding cassette region, homologous to that in multidrug resistance associated protein (MRP), is hereditarily defective in Eisai hyperbilirubinemic rats (EHBR).</title>
        <authorList>
            <person name="Ito K."/>
            <person name="Suzuki H."/>
            <person name="Hirohashi T."/>
            <person name="Kume K."/>
            <person name="Shimizu T."/>
            <person name="Sugiyama Y."/>
        </authorList>
    </citation>
    <scope>NUCLEOTIDE SEQUENCE [MRNA]</scope>
    <scope>INVOLVEMENT IN EHBR</scope>
    <source>
        <strain>Sprague-Dawley</strain>
        <tissue>Liver</tissue>
    </source>
</reference>
<reference key="4">
    <citation type="journal article" date="2012" name="Nat. Commun.">
        <title>Quantitative maps of protein phosphorylation sites across 14 different rat organs and tissues.</title>
        <authorList>
            <person name="Lundby A."/>
            <person name="Secher A."/>
            <person name="Lage K."/>
            <person name="Nordsborg N.B."/>
            <person name="Dmytriyev A."/>
            <person name="Lundby C."/>
            <person name="Olsen J.V."/>
        </authorList>
    </citation>
    <scope>PHOSPHORYLATION [LARGE SCALE ANALYSIS] AT SER-279; SER-281 AND SER-874</scope>
    <scope>IDENTIFICATION BY MASS SPECTROMETRY [LARGE SCALE ANALYSIS]</scope>
</reference>
<reference key="5">
    <citation type="journal article" date="1999" name="Hepatology">
        <title>Transport of monoglucuronosyl and bisglucuronosyl bilirubin by recombinant human and rat multidrug resistance protein 2.</title>
        <authorList>
            <person name="Kamisako T."/>
            <person name="Leier I."/>
            <person name="Cui Y."/>
            <person name="Koenig J."/>
            <person name="Buchholz U."/>
            <person name="Hummel-Eisenbeiss J."/>
            <person name="Keppler D."/>
        </authorList>
    </citation>
    <scope>FUNCTION</scope>
    <scope>CATALYTIC ACTIVITY</scope>
    <scope>BIOPHYSICOCHEMICAL PROPERTIES</scope>
</reference>
<reference key="6">
    <citation type="journal article" date="1999" name="Mol. Pharmacol.">
        <title>Drug resistance and ATP-dependent conjugate transport mediated by the apical multidrug resistance protein, MRP2, permanently expressed in human and canine cells.</title>
        <authorList>
            <person name="Cui Y."/>
            <person name="Koenig J."/>
            <person name="Buchholz J.K."/>
            <person name="Spring H."/>
            <person name="Leier I."/>
            <person name="Keppler D."/>
        </authorList>
    </citation>
    <scope>CATALYTIC ACTIVITY</scope>
    <scope>FUNCTION</scope>
    <scope>SUBCELLULAR LOCATION</scope>
    <scope>BIOPHYSICOCHEMICAL PROPERTIES</scope>
</reference>
<reference key="7">
    <citation type="journal article" date="2001" name="Biochim. Biophys. Acta">
        <title>Characterization of bile acid transport mediated by multidrug resistance associated protein 2 and bile salt export pump.</title>
        <authorList>
            <person name="Akita H."/>
            <person name="Suzuki H."/>
            <person name="Ito K."/>
            <person name="Kinoshita S."/>
            <person name="Sato N."/>
            <person name="Takikawa H."/>
            <person name="Sugiyama Y."/>
        </authorList>
    </citation>
    <scope>FUNCTION</scope>
    <scope>CATALYTIC ACTIVITY</scope>
    <scope>BIOPHYSICOCHEMICAL PROPERTIES</scope>
</reference>
<comment type="function">
    <text evidence="2 7 8 9 11">ATP-dependent transporter of the ATP-binding cassette (ABC) family that binds and hydrolyzes ATP to enable active transport of various substrates including many drugs, toxicants and endogenous compound across cell membranes. Transports a wide variety of conjugated organic anions such as sulfate-, glucuronide- and glutathione (GSH)-conjugates of endo- and xenobiotics substrates (PubMed:10220572, PubMed:10421658, PubMed:11248200, PubMed:8662992). Mediates hepatobiliary excretion of mono- and bis-glucuronidated bilirubin molecules and therefore play an important role in bilirubin detoxification (PubMed:10421658). Also mediates hepatobiliary excretion of others glucuronide conjugates such as 17beta-estradiol 17-glucosiduronic acid and leukotriene C4 (PubMed:10220572, PubMed:8662992). Transports sulfated bile salt such as taurolithocholate sulfate (PubMed:11248200). Transports various anticancer drugs, such as anthracycline, vinca alkaloid and methotrexate and HIV-drugs such as protease inhibitors (By similarity).</text>
</comment>
<comment type="catalytic activity">
    <reaction evidence="7 11">
        <text>an S-substituted glutathione(in) + ATP + H2O = an S-substituted glutathione(out) + ADP + phosphate + H(+)</text>
        <dbReference type="Rhea" id="RHEA:19121"/>
        <dbReference type="ChEBI" id="CHEBI:15377"/>
        <dbReference type="ChEBI" id="CHEBI:15378"/>
        <dbReference type="ChEBI" id="CHEBI:30616"/>
        <dbReference type="ChEBI" id="CHEBI:43474"/>
        <dbReference type="ChEBI" id="CHEBI:90779"/>
        <dbReference type="ChEBI" id="CHEBI:456216"/>
        <dbReference type="EC" id="7.6.2.3"/>
    </reaction>
    <physiologicalReaction direction="left-to-right" evidence="15 17">
        <dbReference type="Rhea" id="RHEA:19122"/>
    </physiologicalReaction>
</comment>
<comment type="catalytic activity">
    <reaction evidence="9">
        <text>taurolithocholate 3-sulfate(in) + ATP + H2O = taurolithocholate 3-sulfate(out) + ADP + phosphate + H(+)</text>
        <dbReference type="Rhea" id="RHEA:50084"/>
        <dbReference type="ChEBI" id="CHEBI:15377"/>
        <dbReference type="ChEBI" id="CHEBI:15378"/>
        <dbReference type="ChEBI" id="CHEBI:30616"/>
        <dbReference type="ChEBI" id="CHEBI:43474"/>
        <dbReference type="ChEBI" id="CHEBI:58301"/>
        <dbReference type="ChEBI" id="CHEBI:456216"/>
    </reaction>
    <physiologicalReaction direction="left-to-right" evidence="9">
        <dbReference type="Rhea" id="RHEA:50085"/>
    </physiologicalReaction>
</comment>
<comment type="catalytic activity">
    <reaction evidence="7">
        <text>ATP + H2O + xenobioticSide 1 = ADP + phosphate + xenobioticSide 2.</text>
        <dbReference type="EC" id="7.6.2.2"/>
    </reaction>
</comment>
<comment type="catalytic activity">
    <reaction evidence="7">
        <text>17beta-estradiol 17-O-(beta-D-glucuronate)(in) + ATP + H2O = 17beta-estradiol 17-O-(beta-D-glucuronate)(out) + ADP + phosphate + H(+)</text>
        <dbReference type="Rhea" id="RHEA:60128"/>
        <dbReference type="ChEBI" id="CHEBI:15377"/>
        <dbReference type="ChEBI" id="CHEBI:15378"/>
        <dbReference type="ChEBI" id="CHEBI:30616"/>
        <dbReference type="ChEBI" id="CHEBI:43474"/>
        <dbReference type="ChEBI" id="CHEBI:82961"/>
        <dbReference type="ChEBI" id="CHEBI:456216"/>
    </reaction>
    <physiologicalReaction direction="left-to-right" evidence="7">
        <dbReference type="Rhea" id="RHEA:60129"/>
    </physiologicalReaction>
</comment>
<comment type="catalytic activity">
    <reaction evidence="7 11">
        <text>leukotriene C4(in) + ATP + H2O = leukotriene C4(out) + ADP + phosphate + H(+)</text>
        <dbReference type="Rhea" id="RHEA:38963"/>
        <dbReference type="ChEBI" id="CHEBI:15377"/>
        <dbReference type="ChEBI" id="CHEBI:15378"/>
        <dbReference type="ChEBI" id="CHEBI:30616"/>
        <dbReference type="ChEBI" id="CHEBI:43474"/>
        <dbReference type="ChEBI" id="CHEBI:57973"/>
        <dbReference type="ChEBI" id="CHEBI:456216"/>
    </reaction>
    <physiologicalReaction direction="left-to-right" evidence="15">
        <dbReference type="Rhea" id="RHEA:38964"/>
    </physiologicalReaction>
</comment>
<comment type="catalytic activity">
    <reaction evidence="8">
        <text>(4Z,15Z)-bilirubin IXalpha C8-beta-D-glucuronoside(in) + ATP + H2O = (4Z,15Z)-bilirubin IXalpha C8-beta-D-glucuronoside(out) + ADP + phosphate + H(+)</text>
        <dbReference type="Rhea" id="RHEA:66180"/>
        <dbReference type="ChEBI" id="CHEBI:15377"/>
        <dbReference type="ChEBI" id="CHEBI:15378"/>
        <dbReference type="ChEBI" id="CHEBI:30616"/>
        <dbReference type="ChEBI" id="CHEBI:43474"/>
        <dbReference type="ChEBI" id="CHEBI:229704"/>
        <dbReference type="ChEBI" id="CHEBI:456216"/>
    </reaction>
    <physiologicalReaction direction="left-to-right" evidence="16">
        <dbReference type="Rhea" id="RHEA:66181"/>
    </physiologicalReaction>
</comment>
<comment type="catalytic activity">
    <reaction evidence="16">
        <text>(4Z,15Z)-bilirubin IXalpha C8,C12-beta-D-bisglucuronoside(in) + ATP + H2O = (4Z,15Z)-bilirubin IXalpha C8,C12-beta-D-bisglucuronoside(out) + ADP + phosphate + H(+)</text>
        <dbReference type="Rhea" id="RHEA:66192"/>
        <dbReference type="ChEBI" id="CHEBI:15377"/>
        <dbReference type="ChEBI" id="CHEBI:15378"/>
        <dbReference type="ChEBI" id="CHEBI:30616"/>
        <dbReference type="ChEBI" id="CHEBI:43474"/>
        <dbReference type="ChEBI" id="CHEBI:229706"/>
        <dbReference type="ChEBI" id="CHEBI:456216"/>
    </reaction>
</comment>
<comment type="biophysicochemical properties">
    <kinetics>
        <KM evidence="9">3.9 uM for taurolithocholate 3-sulfate</KM>
        <KM evidence="7">6.9 uM for 17beta-estradiol 17-O-(beta-D-glucuronate)</KM>
        <KM evidence="7">1.1 uM for leukotriene C4</KM>
        <KM evidence="8">0.8 uM for bilirubin-glucuronoside</KM>
        <KM evidence="8">0.5 uM for bilirubin-bisglucuronoside</KM>
        <Vmax evidence="9">1486.0 pmol/min/mg enzyme for taurolithocholate 3-sulfate</Vmax>
        <Vmax evidence="8">152.0 pmol/min/mg enzyme for bilirubin-glucuronoside transport</Vmax>
        <Vmax evidence="8">264.0 pmol/min/mg enzyme bilirubin-bisglucuronoside transport</Vmax>
    </kinetics>
</comment>
<comment type="subcellular location">
    <subcellularLocation>
        <location evidence="7 11">Apical cell membrane</location>
        <topology evidence="3">Multi-pass membrane protein</topology>
    </subcellularLocation>
    <text evidence="11">Localized to the canalicular membrane of hepatocytes.</text>
</comment>
<comment type="tissue specificity">
    <text evidence="11">Mainly expressed in the liver.</text>
</comment>
<comment type="disease">
    <text evidence="10 12">Defects in Abcc2 are a cause of hereditary conjugated hyperbilirubinemia (EHBR).</text>
</comment>
<comment type="similarity">
    <text evidence="14">Belongs to the ABC transporter superfamily. ABCC family. Conjugate transporter (TC 3.A.1.208) subfamily.</text>
</comment>
<proteinExistence type="evidence at protein level"/>
<sequence length="1541" mass="173384">MDKFCNSTFWDLSLLESPEADLPLCFEQTVLVWIPLGFLWLLAPWQLYSVYRSRTKRSSITKFYLAKQVFVVFLLILAAIDLSLALTEDTGQATVPPVRYTNPILYLCTWLLVLAVQHSRQWCVRKNSWFLSLFWILSVLCGVFQFQTLIRALLKDSKSNMAYSYLFFVSYGFQIVLLILTAFSGPSDSTQTPSVTASFLSSITFSWYDRTVLKGYKHPLTLEDVWDIDEGFKTRSVTSKFEAAMTKDLQKARQAFQRRLQKSQRKPEATLHGLNKKQSQSQDVLVLEEAKKKSEKTTKDYPKSWLIKSLFKTFHVVILKSFILKLIHDLLVFLNPQLLKLLIGFVKSSNSYVWFGYICAILMFAVTLIQSFCLQSYFQHCFVLGMCVRTTVMSSIYKKALTLSNLARKQYTIGETVNLMSVDSQKLMDATNYMQLVWSSVIQITLSIFFLWRELGPSILAGVGVMVLLIPVNGVLATKIRNIQVQNMKNKDKRLKIMNEILSGIKILKYFAWEPSFQEQVQGIRKKELKNLLRFGQLQSLLIFILQITPILVSVVTFSVYVLVDSANVLNAEKAFTSITLFNILRFPLSMLPMVTSSILQASVSVDRLERYLGGDDLDTSAIRRVSNFDKAVKFSEASFTWDPDLEATIQDVNLDIKPGQLVAVVGTVGSGKSSLVSAMLGEMENVHGHITIQGSTAYVPQQSWIQNGTIKDNILFGSEYNEKKYQQVLKACALLPDLEILPGGDMAEIGEKGINLSGGQKQRVSLARAAYQDADIYILDDPLSAVDAHVGKHIFNKVVGPNGLLAGKTRIFVTHGIHFLPQVDEIVVLGKGTILEKGSYRDLLDKKGVFARNWKTFMKHSGPEGEATVNNDSEAEDDDDGLIPTMEEIPEDAASLAMRRENSLRRTLSRSSRSSSRRGKSLKNSLKIKNVNVLKEKEKEVEGQKLIKKEFVETGKVKFSIYLKYLQAVGWWSILFIILFYGLNNVAFIGSNLWLSAWTSDSDNLNGTNNSSSHRDMRIGVFGALGLAQGICLLISTLWSIYACRNASKALHGQLLTNILRAPMRFFDTTPTGRIVNRFSGDISTVDDLLPQTLRSWMMCFFGIAGTLVMICMATPVFAIIIIPLSILYISVQVFYVATSRQLRRLDSVTKSPIYSHFSETVTGLPIIRAFEHQQRFLAWNEKQIDINQKCVFSWITSNRWLAIRLELVGNLVVFCSALLLVIYRKTLTGDVVGFVLSNALNITQTLNWLVRMTSEAETNIVAVERISEYINVENEAPWVTDKRPPADWPRHGEIQFNNYQVRYRPELDLVLKGITCNIKSGEKVGVVGRTGAGKSSLTNCLFRILESAGGQIIIDGIDVASIGLHDLRERLTIIPQDPILFSGSLRMNLDPFNKYSDEEVWRALELAHLRSFVSGLQLGLLSEVTEGGDNLSIGQRQLLCLGRAVLRKSKILVLDEATAAVDLETDSLIQTTIRKEFSQCTVITIAHRLHTIMDSDKIMVLDNGKIVEYGSPEELLSNRGSFYLMAKEAGIENVNHTEL</sequence>
<dbReference type="EC" id="7.6.2.-" evidence="8 9"/>
<dbReference type="EC" id="7.6.2.2" evidence="7"/>
<dbReference type="EC" id="7.6.2.3" evidence="7 11"/>
<dbReference type="EMBL" id="L49379">
    <property type="protein sequence ID" value="AAC42087.1"/>
    <property type="molecule type" value="mRNA"/>
</dbReference>
<dbReference type="EMBL" id="X96393">
    <property type="protein sequence ID" value="CAA65257.1"/>
    <property type="molecule type" value="mRNA"/>
</dbReference>
<dbReference type="EMBL" id="D86086">
    <property type="protein sequence ID" value="BAA13016.1"/>
    <property type="molecule type" value="mRNA"/>
</dbReference>
<dbReference type="PIR" id="S71839">
    <property type="entry name" value="S71839"/>
</dbReference>
<dbReference type="RefSeq" id="NP_036965.1">
    <property type="nucleotide sequence ID" value="NM_012833.2"/>
</dbReference>
<dbReference type="PDB" id="8RQ3">
    <property type="method" value="EM"/>
    <property type="resolution" value="3.21 A"/>
    <property type="chains" value="A=1-1541"/>
</dbReference>
<dbReference type="PDB" id="8RQ4">
    <property type="method" value="EM"/>
    <property type="resolution" value="3.45 A"/>
    <property type="chains" value="A=1-1541"/>
</dbReference>
<dbReference type="PDBsum" id="8RQ3"/>
<dbReference type="PDBsum" id="8RQ4"/>
<dbReference type="EMDB" id="EMD-19431"/>
<dbReference type="EMDB" id="EMD-19433"/>
<dbReference type="SMR" id="Q63120"/>
<dbReference type="BioGRID" id="247342">
    <property type="interactions" value="1"/>
</dbReference>
<dbReference type="FunCoup" id="Q63120">
    <property type="interactions" value="298"/>
</dbReference>
<dbReference type="IntAct" id="Q63120">
    <property type="interactions" value="2"/>
</dbReference>
<dbReference type="MINT" id="Q63120"/>
<dbReference type="STRING" id="10116.ENSRNOP00000064799"/>
<dbReference type="BindingDB" id="Q63120"/>
<dbReference type="ChEMBL" id="CHEMBL2073676"/>
<dbReference type="CarbonylDB" id="Q63120"/>
<dbReference type="GlyCosmos" id="Q63120">
    <property type="glycosylation" value="4 sites, No reported glycans"/>
</dbReference>
<dbReference type="GlyGen" id="Q63120">
    <property type="glycosylation" value="4 sites"/>
</dbReference>
<dbReference type="iPTMnet" id="Q63120"/>
<dbReference type="PhosphoSitePlus" id="Q63120"/>
<dbReference type="PaxDb" id="10116-ENSRNOP00000064799"/>
<dbReference type="Ensembl" id="ENSRNOT00000070861.3">
    <property type="protein sequence ID" value="ENSRNOP00000064799.1"/>
    <property type="gene ID" value="ENSRNOG00000046727.3"/>
</dbReference>
<dbReference type="GeneID" id="25303"/>
<dbReference type="KEGG" id="rno:25303"/>
<dbReference type="AGR" id="RGD:2366"/>
<dbReference type="CTD" id="1244"/>
<dbReference type="RGD" id="2366">
    <property type="gene designation" value="Abcc2"/>
</dbReference>
<dbReference type="eggNOG" id="KOG0054">
    <property type="taxonomic scope" value="Eukaryota"/>
</dbReference>
<dbReference type="GeneTree" id="ENSGT00940000161741"/>
<dbReference type="HOGENOM" id="CLU_000604_27_3_1"/>
<dbReference type="InParanoid" id="Q63120"/>
<dbReference type="OrthoDB" id="6500128at2759"/>
<dbReference type="PhylomeDB" id="Q63120"/>
<dbReference type="BRENDA" id="7.6.2.3">
    <property type="organism ID" value="5301"/>
</dbReference>
<dbReference type="Reactome" id="R-RNO-189483">
    <property type="pathway name" value="Heme degradation"/>
</dbReference>
<dbReference type="Reactome" id="R-RNO-382556">
    <property type="pathway name" value="ABC-family proteins mediated transport"/>
</dbReference>
<dbReference type="Reactome" id="R-RNO-9749641">
    <property type="pathway name" value="Aspirin ADME"/>
</dbReference>
<dbReference type="Reactome" id="R-RNO-9753281">
    <property type="pathway name" value="Paracetamol ADME"/>
</dbReference>
<dbReference type="Reactome" id="R-RNO-9754706">
    <property type="pathway name" value="Atorvastatin ADME"/>
</dbReference>
<dbReference type="SABIO-RK" id="Q63120"/>
<dbReference type="PRO" id="PR:Q63120"/>
<dbReference type="Proteomes" id="UP000002494">
    <property type="component" value="Chromosome 1"/>
</dbReference>
<dbReference type="Bgee" id="ENSRNOG00000046727">
    <property type="expression patterns" value="Expressed in liver and 10 other cell types or tissues"/>
</dbReference>
<dbReference type="GO" id="GO:0016324">
    <property type="term" value="C:apical plasma membrane"/>
    <property type="evidence" value="ECO:0000314"/>
    <property type="project" value="UniProtKB"/>
</dbReference>
<dbReference type="GO" id="GO:0031526">
    <property type="term" value="C:brush border membrane"/>
    <property type="evidence" value="ECO:0000314"/>
    <property type="project" value="RGD"/>
</dbReference>
<dbReference type="GO" id="GO:0009986">
    <property type="term" value="C:cell surface"/>
    <property type="evidence" value="ECO:0000266"/>
    <property type="project" value="RGD"/>
</dbReference>
<dbReference type="GO" id="GO:0046581">
    <property type="term" value="C:intercellular canaliculus"/>
    <property type="evidence" value="ECO:0000266"/>
    <property type="project" value="RGD"/>
</dbReference>
<dbReference type="GO" id="GO:0046691">
    <property type="term" value="C:intracellular canaliculus"/>
    <property type="evidence" value="ECO:0000314"/>
    <property type="project" value="UniProtKB"/>
</dbReference>
<dbReference type="GO" id="GO:0016020">
    <property type="term" value="C:membrane"/>
    <property type="evidence" value="ECO:0000266"/>
    <property type="project" value="RGD"/>
</dbReference>
<dbReference type="GO" id="GO:0005886">
    <property type="term" value="C:plasma membrane"/>
    <property type="evidence" value="ECO:0000266"/>
    <property type="project" value="RGD"/>
</dbReference>
<dbReference type="GO" id="GO:0015431">
    <property type="term" value="F:ABC-type glutathione S-conjugate transporter activity"/>
    <property type="evidence" value="ECO:0000315"/>
    <property type="project" value="UniProtKB"/>
</dbReference>
<dbReference type="GO" id="GO:0008559">
    <property type="term" value="F:ABC-type xenobiotic transporter activity"/>
    <property type="evidence" value="ECO:0000315"/>
    <property type="project" value="UniProtKB"/>
</dbReference>
<dbReference type="GO" id="GO:0005524">
    <property type="term" value="F:ATP binding"/>
    <property type="evidence" value="ECO:0007669"/>
    <property type="project" value="UniProtKB-KW"/>
</dbReference>
<dbReference type="GO" id="GO:0016887">
    <property type="term" value="F:ATP hydrolysis activity"/>
    <property type="evidence" value="ECO:0007669"/>
    <property type="project" value="InterPro"/>
</dbReference>
<dbReference type="GO" id="GO:0042626">
    <property type="term" value="F:ATPase-coupled transmembrane transporter activity"/>
    <property type="evidence" value="ECO:0000250"/>
    <property type="project" value="UniProtKB"/>
</dbReference>
<dbReference type="GO" id="GO:0015127">
    <property type="term" value="F:bilirubin transmembrane transporter activity"/>
    <property type="evidence" value="ECO:0000315"/>
    <property type="project" value="UniProtKB"/>
</dbReference>
<dbReference type="GO" id="GO:0008514">
    <property type="term" value="F:organic anion transmembrane transporter activity"/>
    <property type="evidence" value="ECO:0000304"/>
    <property type="project" value="RGD"/>
</dbReference>
<dbReference type="GO" id="GO:0019904">
    <property type="term" value="F:protein domain specific binding"/>
    <property type="evidence" value="ECO:0000353"/>
    <property type="project" value="RGD"/>
</dbReference>
<dbReference type="GO" id="GO:0042910">
    <property type="term" value="F:xenobiotic transmembrane transporter activity"/>
    <property type="evidence" value="ECO:0000266"/>
    <property type="project" value="RGD"/>
</dbReference>
<dbReference type="GO" id="GO:0016999">
    <property type="term" value="P:antibiotic metabolic process"/>
    <property type="evidence" value="ECO:0000315"/>
    <property type="project" value="RGD"/>
</dbReference>
<dbReference type="GO" id="GO:1901086">
    <property type="term" value="P:benzylpenicillin metabolic process"/>
    <property type="evidence" value="ECO:0000315"/>
    <property type="project" value="RGD"/>
</dbReference>
<dbReference type="GO" id="GO:0015721">
    <property type="term" value="P:bile acid and bile salt transport"/>
    <property type="evidence" value="ECO:0000250"/>
    <property type="project" value="UniProtKB"/>
</dbReference>
<dbReference type="GO" id="GO:0015723">
    <property type="term" value="P:bilirubin transport"/>
    <property type="evidence" value="ECO:0000315"/>
    <property type="project" value="UniProtKB"/>
</dbReference>
<dbReference type="GO" id="GO:0015722">
    <property type="term" value="P:canalicular bile acid transport"/>
    <property type="evidence" value="ECO:0000315"/>
    <property type="project" value="RGD"/>
</dbReference>
<dbReference type="GO" id="GO:0071549">
    <property type="term" value="P:cellular response to dexamethasone stimulus"/>
    <property type="evidence" value="ECO:0000270"/>
    <property type="project" value="RGD"/>
</dbReference>
<dbReference type="GO" id="GO:0071347">
    <property type="term" value="P:cellular response to interleukin-1"/>
    <property type="evidence" value="ECO:0000270"/>
    <property type="project" value="RGD"/>
</dbReference>
<dbReference type="GO" id="GO:0071354">
    <property type="term" value="P:cellular response to interleukin-6"/>
    <property type="evidence" value="ECO:0000270"/>
    <property type="project" value="RGD"/>
</dbReference>
<dbReference type="GO" id="GO:0071222">
    <property type="term" value="P:cellular response to lipopolysaccharide"/>
    <property type="evidence" value="ECO:0000270"/>
    <property type="project" value="RGD"/>
</dbReference>
<dbReference type="GO" id="GO:0071356">
    <property type="term" value="P:cellular response to tumor necrosis factor"/>
    <property type="evidence" value="ECO:0000270"/>
    <property type="project" value="RGD"/>
</dbReference>
<dbReference type="GO" id="GO:0071466">
    <property type="term" value="P:cellular response to xenobiotic stimulus"/>
    <property type="evidence" value="ECO:0000270"/>
    <property type="project" value="RGD"/>
</dbReference>
<dbReference type="GO" id="GO:0050787">
    <property type="term" value="P:detoxification of mercury ion"/>
    <property type="evidence" value="ECO:0000315"/>
    <property type="project" value="RGD"/>
</dbReference>
<dbReference type="GO" id="GO:0007565">
    <property type="term" value="P:female pregnancy"/>
    <property type="evidence" value="ECO:0000270"/>
    <property type="project" value="RGD"/>
</dbReference>
<dbReference type="GO" id="GO:0030644">
    <property type="term" value="P:intracellular chloride ion homeostasis"/>
    <property type="evidence" value="ECO:0000314"/>
    <property type="project" value="RGD"/>
</dbReference>
<dbReference type="GO" id="GO:0071716">
    <property type="term" value="P:leukotriene transport"/>
    <property type="evidence" value="ECO:0000315"/>
    <property type="project" value="UniProtKB"/>
</dbReference>
<dbReference type="GO" id="GO:0015694">
    <property type="term" value="P:mercury ion transport"/>
    <property type="evidence" value="ECO:0000315"/>
    <property type="project" value="RGD"/>
</dbReference>
<dbReference type="GO" id="GO:0010629">
    <property type="term" value="P:negative regulation of gene expression"/>
    <property type="evidence" value="ECO:0000315"/>
    <property type="project" value="ARUK-UCL"/>
</dbReference>
<dbReference type="GO" id="GO:0015711">
    <property type="term" value="P:organic anion transport"/>
    <property type="evidence" value="ECO:0000315"/>
    <property type="project" value="RGD"/>
</dbReference>
<dbReference type="GO" id="GO:0015732">
    <property type="term" value="P:prostaglandin transport"/>
    <property type="evidence" value="ECO:0000315"/>
    <property type="project" value="RGD"/>
</dbReference>
<dbReference type="GO" id="GO:0097327">
    <property type="term" value="P:response to antineoplastic agent"/>
    <property type="evidence" value="ECO:0000270"/>
    <property type="project" value="RGD"/>
</dbReference>
<dbReference type="GO" id="GO:0046685">
    <property type="term" value="P:response to arsenic-containing substance"/>
    <property type="evidence" value="ECO:0000270"/>
    <property type="project" value="RGD"/>
</dbReference>
<dbReference type="GO" id="GO:0032355">
    <property type="term" value="P:response to estradiol"/>
    <property type="evidence" value="ECO:0000270"/>
    <property type="project" value="RGD"/>
</dbReference>
<dbReference type="GO" id="GO:0043627">
    <property type="term" value="P:response to estrogen"/>
    <property type="evidence" value="ECO:0000314"/>
    <property type="project" value="RGD"/>
</dbReference>
<dbReference type="GO" id="GO:0033762">
    <property type="term" value="P:response to glucagon"/>
    <property type="evidence" value="ECO:0000270"/>
    <property type="project" value="RGD"/>
</dbReference>
<dbReference type="GO" id="GO:0032496">
    <property type="term" value="P:response to lipopolysaccharide"/>
    <property type="evidence" value="ECO:0000270"/>
    <property type="project" value="RGD"/>
</dbReference>
<dbReference type="GO" id="GO:0006979">
    <property type="term" value="P:response to oxidative stress"/>
    <property type="evidence" value="ECO:0000270"/>
    <property type="project" value="RGD"/>
</dbReference>
<dbReference type="GO" id="GO:0048545">
    <property type="term" value="P:response to steroid hormone"/>
    <property type="evidence" value="ECO:0000270"/>
    <property type="project" value="RGD"/>
</dbReference>
<dbReference type="GO" id="GO:0009410">
    <property type="term" value="P:response to xenobiotic stimulus"/>
    <property type="evidence" value="ECO:0000314"/>
    <property type="project" value="RGD"/>
</dbReference>
<dbReference type="GO" id="GO:0070327">
    <property type="term" value="P:thyroid hormone transport"/>
    <property type="evidence" value="ECO:0000315"/>
    <property type="project" value="RGD"/>
</dbReference>
<dbReference type="GO" id="GO:0070633">
    <property type="term" value="P:transepithelial transport"/>
    <property type="evidence" value="ECO:0000315"/>
    <property type="project" value="ARUK-UCL"/>
</dbReference>
<dbReference type="GO" id="GO:0055085">
    <property type="term" value="P:transmembrane transport"/>
    <property type="evidence" value="ECO:0000318"/>
    <property type="project" value="GO_Central"/>
</dbReference>
<dbReference type="GO" id="GO:0042178">
    <property type="term" value="P:xenobiotic catabolic process"/>
    <property type="evidence" value="ECO:0000315"/>
    <property type="project" value="RGD"/>
</dbReference>
<dbReference type="GO" id="GO:1990961">
    <property type="term" value="P:xenobiotic detoxification by transmembrane export across the plasma membrane"/>
    <property type="evidence" value="ECO:0000315"/>
    <property type="project" value="RGD"/>
</dbReference>
<dbReference type="GO" id="GO:0046618">
    <property type="term" value="P:xenobiotic export from cell"/>
    <property type="evidence" value="ECO:0000266"/>
    <property type="project" value="RGD"/>
</dbReference>
<dbReference type="GO" id="GO:0006855">
    <property type="term" value="P:xenobiotic transmembrane transport"/>
    <property type="evidence" value="ECO:0000315"/>
    <property type="project" value="UniProtKB"/>
</dbReference>
<dbReference type="GO" id="GO:1990962">
    <property type="term" value="P:xenobiotic transport across blood-brain barrier"/>
    <property type="evidence" value="ECO:0000315"/>
    <property type="project" value="ARUK-UCL"/>
</dbReference>
<dbReference type="CDD" id="cd18595">
    <property type="entry name" value="ABC_6TM_MRP1_2_3_6_D1_like"/>
    <property type="match status" value="1"/>
</dbReference>
<dbReference type="CDD" id="cd18603">
    <property type="entry name" value="ABC_6TM_MRP1_2_3_6_D2_like"/>
    <property type="match status" value="1"/>
</dbReference>
<dbReference type="CDD" id="cd03250">
    <property type="entry name" value="ABCC_MRP_domain1"/>
    <property type="match status" value="1"/>
</dbReference>
<dbReference type="CDD" id="cd03244">
    <property type="entry name" value="ABCC_MRP_domain2"/>
    <property type="match status" value="1"/>
</dbReference>
<dbReference type="FunFam" id="3.40.50.300:FF:000293">
    <property type="entry name" value="ATP binding cassette subfamily C member 1"/>
    <property type="match status" value="1"/>
</dbReference>
<dbReference type="FunFam" id="1.20.1560.10:FF:000001">
    <property type="entry name" value="ATP-binding cassette subfamily C member 1"/>
    <property type="match status" value="1"/>
</dbReference>
<dbReference type="FunFam" id="1.20.1560.10:FF:000007">
    <property type="entry name" value="ATP-binding cassette subfamily C member 1"/>
    <property type="match status" value="1"/>
</dbReference>
<dbReference type="FunFam" id="3.40.50.300:FF:000074">
    <property type="entry name" value="Multidrug resistance-associated protein 5 isoform 1"/>
    <property type="match status" value="1"/>
</dbReference>
<dbReference type="Gene3D" id="1.20.1560.10">
    <property type="entry name" value="ABC transporter type 1, transmembrane domain"/>
    <property type="match status" value="2"/>
</dbReference>
<dbReference type="Gene3D" id="3.40.50.300">
    <property type="entry name" value="P-loop containing nucleotide triphosphate hydrolases"/>
    <property type="match status" value="2"/>
</dbReference>
<dbReference type="InterPro" id="IPR003593">
    <property type="entry name" value="AAA+_ATPase"/>
</dbReference>
<dbReference type="InterPro" id="IPR011527">
    <property type="entry name" value="ABC1_TM_dom"/>
</dbReference>
<dbReference type="InterPro" id="IPR036640">
    <property type="entry name" value="ABC1_TM_sf"/>
</dbReference>
<dbReference type="InterPro" id="IPR003439">
    <property type="entry name" value="ABC_transporter-like_ATP-bd"/>
</dbReference>
<dbReference type="InterPro" id="IPR017871">
    <property type="entry name" value="ABC_transporter-like_CS"/>
</dbReference>
<dbReference type="InterPro" id="IPR050173">
    <property type="entry name" value="ABC_transporter_C-like"/>
</dbReference>
<dbReference type="InterPro" id="IPR005292">
    <property type="entry name" value="MRP"/>
</dbReference>
<dbReference type="InterPro" id="IPR027417">
    <property type="entry name" value="P-loop_NTPase"/>
</dbReference>
<dbReference type="InterPro" id="IPR056227">
    <property type="entry name" value="TMD0_ABC"/>
</dbReference>
<dbReference type="NCBIfam" id="TIGR00957">
    <property type="entry name" value="MRP_assoc_pro"/>
    <property type="match status" value="1"/>
</dbReference>
<dbReference type="PANTHER" id="PTHR24223">
    <property type="entry name" value="ATP-BINDING CASSETTE SUB-FAMILY C"/>
    <property type="match status" value="1"/>
</dbReference>
<dbReference type="PANTHER" id="PTHR24223:SF176">
    <property type="entry name" value="ATP-BINDING CASSETTE SUB-FAMILY C MEMBER 2"/>
    <property type="match status" value="1"/>
</dbReference>
<dbReference type="Pfam" id="PF00664">
    <property type="entry name" value="ABC_membrane"/>
    <property type="match status" value="2"/>
</dbReference>
<dbReference type="Pfam" id="PF00005">
    <property type="entry name" value="ABC_tran"/>
    <property type="match status" value="2"/>
</dbReference>
<dbReference type="Pfam" id="PF24357">
    <property type="entry name" value="TMD0_ABC"/>
    <property type="match status" value="1"/>
</dbReference>
<dbReference type="SMART" id="SM00382">
    <property type="entry name" value="AAA"/>
    <property type="match status" value="2"/>
</dbReference>
<dbReference type="SUPFAM" id="SSF90123">
    <property type="entry name" value="ABC transporter transmembrane region"/>
    <property type="match status" value="2"/>
</dbReference>
<dbReference type="SUPFAM" id="SSF52540">
    <property type="entry name" value="P-loop containing nucleoside triphosphate hydrolases"/>
    <property type="match status" value="2"/>
</dbReference>
<dbReference type="PROSITE" id="PS50929">
    <property type="entry name" value="ABC_TM1F"/>
    <property type="match status" value="2"/>
</dbReference>
<dbReference type="PROSITE" id="PS00211">
    <property type="entry name" value="ABC_TRANSPORTER_1"/>
    <property type="match status" value="1"/>
</dbReference>
<dbReference type="PROSITE" id="PS50893">
    <property type="entry name" value="ABC_TRANSPORTER_2"/>
    <property type="match status" value="2"/>
</dbReference>